<organism>
    <name type="scientific">Oryza sativa subsp. japonica</name>
    <name type="common">Rice</name>
    <dbReference type="NCBI Taxonomy" id="39947"/>
    <lineage>
        <taxon>Eukaryota</taxon>
        <taxon>Viridiplantae</taxon>
        <taxon>Streptophyta</taxon>
        <taxon>Embryophyta</taxon>
        <taxon>Tracheophyta</taxon>
        <taxon>Spermatophyta</taxon>
        <taxon>Magnoliopsida</taxon>
        <taxon>Liliopsida</taxon>
        <taxon>Poales</taxon>
        <taxon>Poaceae</taxon>
        <taxon>BOP clade</taxon>
        <taxon>Oryzoideae</taxon>
        <taxon>Oryzeae</taxon>
        <taxon>Oryzinae</taxon>
        <taxon>Oryza</taxon>
        <taxon>Oryza sativa</taxon>
    </lineage>
</organism>
<accession>Q5ZC87</accession>
<accession>Q0JMR4</accession>
<accession>Q8VXB7</accession>
<accession>Q93WG7</accession>
<accession>Q94I74</accession>
<feature type="chain" id="PRO_0000209092" description="Probable potassium transporter 3">
    <location>
        <begin position="1"/>
        <end position="808"/>
    </location>
</feature>
<feature type="topological domain" description="Cytoplasmic" evidence="2">
    <location>
        <begin position="1"/>
        <end position="34"/>
    </location>
</feature>
<feature type="transmembrane region" description="Helical; Name=1" evidence="2">
    <location>
        <begin position="35"/>
        <end position="55"/>
    </location>
</feature>
<feature type="topological domain" description="Extracellular" evidence="2">
    <location>
        <begin position="56"/>
        <end position="81"/>
    </location>
</feature>
<feature type="transmembrane region" description="Helical; Name=2" evidence="2">
    <location>
        <begin position="82"/>
        <end position="102"/>
    </location>
</feature>
<feature type="topological domain" description="Cytoplasmic" evidence="2">
    <location>
        <begin position="103"/>
        <end position="167"/>
    </location>
</feature>
<feature type="transmembrane region" description="Helical; Name=3" evidence="2">
    <location>
        <begin position="168"/>
        <end position="188"/>
    </location>
</feature>
<feature type="topological domain" description="Extracellular" evidence="2">
    <location>
        <begin position="189"/>
        <end position="204"/>
    </location>
</feature>
<feature type="transmembrane region" description="Helical; Name=4" evidence="2">
    <location>
        <begin position="205"/>
        <end position="225"/>
    </location>
</feature>
<feature type="topological domain" description="Cytoplasmic" evidence="2">
    <location>
        <begin position="226"/>
        <end position="232"/>
    </location>
</feature>
<feature type="transmembrane region" description="Helical; Name=5" evidence="2">
    <location>
        <begin position="233"/>
        <end position="253"/>
    </location>
</feature>
<feature type="topological domain" description="Extracellular" evidence="2">
    <location>
        <begin position="254"/>
        <end position="283"/>
    </location>
</feature>
<feature type="transmembrane region" description="Helical; Name=6" evidence="2">
    <location>
        <begin position="284"/>
        <end position="304"/>
    </location>
</feature>
<feature type="topological domain" description="Cytoplasmic" evidence="2">
    <location>
        <begin position="305"/>
        <end position="313"/>
    </location>
</feature>
<feature type="transmembrane region" description="Helical; Name=7" evidence="2">
    <location>
        <begin position="314"/>
        <end position="334"/>
    </location>
</feature>
<feature type="topological domain" description="Extracellular" evidence="2">
    <location>
        <begin position="335"/>
        <end position="354"/>
    </location>
</feature>
<feature type="transmembrane region" description="Helical; Name=8" evidence="2">
    <location>
        <begin position="355"/>
        <end position="375"/>
    </location>
</feature>
<feature type="topological domain" description="Cytoplasmic" evidence="2">
    <location>
        <begin position="376"/>
        <end position="406"/>
    </location>
</feature>
<feature type="transmembrane region" description="Helical; Name=9" evidence="2">
    <location>
        <begin position="407"/>
        <end position="427"/>
    </location>
</feature>
<feature type="topological domain" description="Extracellular" evidence="2">
    <location>
        <begin position="428"/>
        <end position="439"/>
    </location>
</feature>
<feature type="transmembrane region" description="Helical; Name=10" evidence="2">
    <location>
        <begin position="440"/>
        <end position="460"/>
    </location>
</feature>
<feature type="topological domain" description="Cytoplasmic" evidence="2">
    <location>
        <begin position="461"/>
        <end position="464"/>
    </location>
</feature>
<feature type="transmembrane region" description="Helical; Name=11" evidence="2">
    <location>
        <begin position="465"/>
        <end position="485"/>
    </location>
</feature>
<feature type="topological domain" description="Extracellular" evidence="2">
    <location>
        <begin position="486"/>
        <end position="491"/>
    </location>
</feature>
<feature type="transmembrane region" description="Helical; Name=12" evidence="2">
    <location>
        <begin position="492"/>
        <end position="512"/>
    </location>
</feature>
<feature type="topological domain" description="Cytoplasmic" evidence="2">
    <location>
        <begin position="513"/>
        <end position="808"/>
    </location>
</feature>
<feature type="sequence conflict" description="In Ref. 6; AK109760." evidence="3" ref="6">
    <original>Y</original>
    <variation>C</variation>
    <location>
        <position position="301"/>
    </location>
</feature>
<feature type="sequence conflict" description="In Ref. 6; AK100340." evidence="3" ref="6">
    <original>F</original>
    <variation>V</variation>
    <location>
        <position position="334"/>
    </location>
</feature>
<keyword id="KW-0406">Ion transport</keyword>
<keyword id="KW-0472">Membrane</keyword>
<keyword id="KW-0630">Potassium</keyword>
<keyword id="KW-0633">Potassium transport</keyword>
<keyword id="KW-1185">Reference proteome</keyword>
<keyword id="KW-0812">Transmembrane</keyword>
<keyword id="KW-1133">Transmembrane helix</keyword>
<keyword id="KW-0813">Transport</keyword>
<dbReference type="EMBL" id="AC011806">
    <property type="protein sequence ID" value="AAK53843.1"/>
    <property type="status" value="ALT_SEQ"/>
    <property type="molecule type" value="Genomic_DNA"/>
</dbReference>
<dbReference type="EMBL" id="AP003236">
    <property type="protein sequence ID" value="BAD61453.1"/>
    <property type="molecule type" value="Genomic_DNA"/>
</dbReference>
<dbReference type="EMBL" id="AP003281">
    <property type="protein sequence ID" value="BAB64765.1"/>
    <property type="status" value="ALT_SEQ"/>
    <property type="molecule type" value="Genomic_DNA"/>
</dbReference>
<dbReference type="EMBL" id="AP008207">
    <property type="protein sequence ID" value="BAF04964.2"/>
    <property type="status" value="ALT_SEQ"/>
    <property type="molecule type" value="Genomic_DNA"/>
</dbReference>
<dbReference type="EMBL" id="AP014957">
    <property type="status" value="NOT_ANNOTATED_CDS"/>
    <property type="molecule type" value="Genomic_DNA"/>
</dbReference>
<dbReference type="EMBL" id="AK100340">
    <property type="status" value="NOT_ANNOTATED_CDS"/>
    <property type="molecule type" value="mRNA"/>
</dbReference>
<dbReference type="EMBL" id="AK109760">
    <property type="status" value="NOT_ANNOTATED_CDS"/>
    <property type="molecule type" value="mRNA"/>
</dbReference>
<dbReference type="EMBL" id="AJ427974">
    <property type="protein sequence ID" value="CAD20995.1"/>
    <property type="status" value="ALT_SEQ"/>
    <property type="molecule type" value="Genomic_DNA"/>
</dbReference>
<dbReference type="RefSeq" id="XP_015622480.1">
    <property type="nucleotide sequence ID" value="XM_015766994.1"/>
</dbReference>
<dbReference type="FunCoup" id="Q5ZC87">
    <property type="interactions" value="26"/>
</dbReference>
<dbReference type="STRING" id="39947.Q5ZC87"/>
<dbReference type="PaxDb" id="39947-Q5ZC87"/>
<dbReference type="KEGG" id="dosa:Os01g0369300"/>
<dbReference type="eggNOG" id="ENOG502QPSA">
    <property type="taxonomic scope" value="Eukaryota"/>
</dbReference>
<dbReference type="HOGENOM" id="CLU_008142_2_0_1"/>
<dbReference type="InParanoid" id="Q5ZC87"/>
<dbReference type="OrthoDB" id="504708at2759"/>
<dbReference type="Proteomes" id="UP000000763">
    <property type="component" value="Chromosome 1"/>
</dbReference>
<dbReference type="Proteomes" id="UP000059680">
    <property type="component" value="Chromosome 1"/>
</dbReference>
<dbReference type="GO" id="GO:0016020">
    <property type="term" value="C:membrane"/>
    <property type="evidence" value="ECO:0000318"/>
    <property type="project" value="GO_Central"/>
</dbReference>
<dbReference type="GO" id="GO:0015079">
    <property type="term" value="F:potassium ion transmembrane transporter activity"/>
    <property type="evidence" value="ECO:0000318"/>
    <property type="project" value="GO_Central"/>
</dbReference>
<dbReference type="GO" id="GO:0006813">
    <property type="term" value="P:potassium ion transport"/>
    <property type="evidence" value="ECO:0000318"/>
    <property type="project" value="GO_Central"/>
</dbReference>
<dbReference type="InterPro" id="IPR003855">
    <property type="entry name" value="K+_transporter"/>
</dbReference>
<dbReference type="InterPro" id="IPR053952">
    <property type="entry name" value="K_trans_C"/>
</dbReference>
<dbReference type="InterPro" id="IPR053951">
    <property type="entry name" value="K_trans_N"/>
</dbReference>
<dbReference type="NCBIfam" id="TIGR00794">
    <property type="entry name" value="kup"/>
    <property type="match status" value="1"/>
</dbReference>
<dbReference type="PANTHER" id="PTHR30540">
    <property type="entry name" value="OSMOTIC STRESS POTASSIUM TRANSPORTER"/>
    <property type="match status" value="1"/>
</dbReference>
<dbReference type="PANTHER" id="PTHR30540:SF121">
    <property type="entry name" value="POTASSIUM TRANSPORTER 3-RELATED"/>
    <property type="match status" value="1"/>
</dbReference>
<dbReference type="Pfam" id="PF02705">
    <property type="entry name" value="K_trans"/>
    <property type="match status" value="1"/>
</dbReference>
<dbReference type="Pfam" id="PF22776">
    <property type="entry name" value="K_trans_C"/>
    <property type="match status" value="1"/>
</dbReference>
<reference key="1">
    <citation type="submission" date="2001-08" db="EMBL/GenBank/DDBJ databases">
        <title>Genomic sequence for Oryza sativa clone 10P20, Lemont strain, complete sequence.</title>
        <authorList>
            <person name="Huang E.N."/>
            <person name="de la Bastide M."/>
            <person name="Vil D.M."/>
            <person name="Preston R.R."/>
            <person name="Spiegel L.A."/>
            <person name="See L.H."/>
            <person name="Shah R."/>
            <person name="Matero A."/>
            <person name="O'Shaughnessy A."/>
            <person name="Rodriguez M."/>
            <person name="Shekher M."/>
            <person name="Swaby I."/>
            <person name="Schutz K."/>
            <person name="Habermann K."/>
            <person name="Parnell L.D."/>
            <person name="Nascimento L.U."/>
            <person name="Dedhia N.N."/>
            <person name="McCombie W.R."/>
        </authorList>
    </citation>
    <scope>NUCLEOTIDE SEQUENCE [GENOMIC DNA]</scope>
    <source>
        <strain>cv. Lemont</strain>
    </source>
</reference>
<reference key="2">
    <citation type="journal article" date="2002" name="Nature">
        <title>The genome sequence and structure of rice chromosome 1.</title>
        <authorList>
            <person name="Sasaki T."/>
            <person name="Matsumoto T."/>
            <person name="Yamamoto K."/>
            <person name="Sakata K."/>
            <person name="Baba T."/>
            <person name="Katayose Y."/>
            <person name="Wu J."/>
            <person name="Niimura Y."/>
            <person name="Cheng Z."/>
            <person name="Nagamura Y."/>
            <person name="Antonio B.A."/>
            <person name="Kanamori H."/>
            <person name="Hosokawa S."/>
            <person name="Masukawa M."/>
            <person name="Arikawa K."/>
            <person name="Chiden Y."/>
            <person name="Hayashi M."/>
            <person name="Okamoto M."/>
            <person name="Ando T."/>
            <person name="Aoki H."/>
            <person name="Arita K."/>
            <person name="Hamada M."/>
            <person name="Harada C."/>
            <person name="Hijishita S."/>
            <person name="Honda M."/>
            <person name="Ichikawa Y."/>
            <person name="Idonuma A."/>
            <person name="Iijima M."/>
            <person name="Ikeda M."/>
            <person name="Ikeno M."/>
            <person name="Ito S."/>
            <person name="Ito T."/>
            <person name="Ito Y."/>
            <person name="Ito Y."/>
            <person name="Iwabuchi A."/>
            <person name="Kamiya K."/>
            <person name="Karasawa W."/>
            <person name="Katagiri S."/>
            <person name="Kikuta A."/>
            <person name="Kobayashi N."/>
            <person name="Kono I."/>
            <person name="Machita K."/>
            <person name="Maehara T."/>
            <person name="Mizuno H."/>
            <person name="Mizubayashi T."/>
            <person name="Mukai Y."/>
            <person name="Nagasaki H."/>
            <person name="Nakashima M."/>
            <person name="Nakama Y."/>
            <person name="Nakamichi Y."/>
            <person name="Nakamura M."/>
            <person name="Namiki N."/>
            <person name="Negishi M."/>
            <person name="Ohta I."/>
            <person name="Ono N."/>
            <person name="Saji S."/>
            <person name="Sakai K."/>
            <person name="Shibata M."/>
            <person name="Shimokawa T."/>
            <person name="Shomura A."/>
            <person name="Song J."/>
            <person name="Takazaki Y."/>
            <person name="Terasawa K."/>
            <person name="Tsuji K."/>
            <person name="Waki K."/>
            <person name="Yamagata H."/>
            <person name="Yamane H."/>
            <person name="Yoshiki S."/>
            <person name="Yoshihara R."/>
            <person name="Yukawa K."/>
            <person name="Zhong H."/>
            <person name="Iwama H."/>
            <person name="Endo T."/>
            <person name="Ito H."/>
            <person name="Hahn J.H."/>
            <person name="Kim H.-I."/>
            <person name="Eun M.-Y."/>
            <person name="Yano M."/>
            <person name="Jiang J."/>
            <person name="Gojobori T."/>
        </authorList>
    </citation>
    <scope>NUCLEOTIDE SEQUENCE [LARGE SCALE GENOMIC DNA]</scope>
    <source>
        <strain>cv. Nipponbare</strain>
    </source>
</reference>
<reference key="3">
    <citation type="journal article" date="2005" name="Nature">
        <title>The map-based sequence of the rice genome.</title>
        <authorList>
            <consortium name="International rice genome sequencing project (IRGSP)"/>
        </authorList>
    </citation>
    <scope>NUCLEOTIDE SEQUENCE [LARGE SCALE GENOMIC DNA]</scope>
    <source>
        <strain>cv. Nipponbare</strain>
    </source>
</reference>
<reference key="4">
    <citation type="journal article" date="2008" name="Nucleic Acids Res.">
        <title>The rice annotation project database (RAP-DB): 2008 update.</title>
        <authorList>
            <consortium name="The rice annotation project (RAP)"/>
        </authorList>
    </citation>
    <scope>GENOME REANNOTATION</scope>
    <source>
        <strain>cv. Nipponbare</strain>
    </source>
</reference>
<reference key="5">
    <citation type="journal article" date="2013" name="Rice">
        <title>Improvement of the Oryza sativa Nipponbare reference genome using next generation sequence and optical map data.</title>
        <authorList>
            <person name="Kawahara Y."/>
            <person name="de la Bastide M."/>
            <person name="Hamilton J.P."/>
            <person name="Kanamori H."/>
            <person name="McCombie W.R."/>
            <person name="Ouyang S."/>
            <person name="Schwartz D.C."/>
            <person name="Tanaka T."/>
            <person name="Wu J."/>
            <person name="Zhou S."/>
            <person name="Childs K.L."/>
            <person name="Davidson R.M."/>
            <person name="Lin H."/>
            <person name="Quesada-Ocampo L."/>
            <person name="Vaillancourt B."/>
            <person name="Sakai H."/>
            <person name="Lee S.S."/>
            <person name="Kim J."/>
            <person name="Numa H."/>
            <person name="Itoh T."/>
            <person name="Buell C.R."/>
            <person name="Matsumoto T."/>
        </authorList>
    </citation>
    <scope>GENOME REANNOTATION</scope>
    <source>
        <strain>cv. Nipponbare</strain>
    </source>
</reference>
<reference key="6">
    <citation type="journal article" date="2003" name="Science">
        <title>Collection, mapping, and annotation of over 28,000 cDNA clones from japonica rice.</title>
        <authorList>
            <consortium name="The rice full-length cDNA consortium"/>
        </authorList>
    </citation>
    <scope>NUCLEOTIDE SEQUENCE [LARGE SCALE MRNA]</scope>
    <source>
        <strain>cv. Nipponbare</strain>
    </source>
</reference>
<reference key="7">
    <citation type="journal article" date="2002" name="Plant Physiol.">
        <title>Inventory and functional characterization of the HAK potassium transporters of rice.</title>
        <authorList>
            <person name="Banuelos M.A."/>
            <person name="Garciadeblas B."/>
            <person name="Cubero B."/>
            <person name="Rodriguez-Navarro A."/>
        </authorList>
    </citation>
    <scope>NUCLEOTIDE SEQUENCE [GENOMIC DNA] OF 26-808</scope>
    <scope>NOMENCLATURE</scope>
    <source>
        <strain>cv. Nipponbare</strain>
    </source>
</reference>
<reference key="8">
    <citation type="journal article" date="2009" name="J. Genet. Genomics">
        <title>Molecular evolution and functional divergence of HAK potassium transporter gene family in rice (Oryza sativa L.).</title>
        <authorList>
            <person name="Yang Z."/>
            <person name="Gao Q."/>
            <person name="Sun C."/>
            <person name="Li W."/>
            <person name="Gu S."/>
            <person name="Xu C."/>
        </authorList>
    </citation>
    <scope>GENE FAMILY</scope>
</reference>
<protein>
    <recommendedName>
        <fullName>Probable potassium transporter 3</fullName>
    </recommendedName>
    <alternativeName>
        <fullName>OsHAK3</fullName>
    </alternativeName>
</protein>
<evidence type="ECO:0000250" key="1"/>
<evidence type="ECO:0000255" key="2"/>
<evidence type="ECO:0000305" key="3"/>
<sequence>MPVADCESGLSPADVTGAGAANGNPGHWRSYYRHVLLLAYQSCGVVYGDLSTSPLYVYKSTFIIGSLRRFQDEEIVFGVFSLVFWTLTLIPLLKYVFIVLAADDNGEGGTFALYSLLVRHAKFSLMPNQEAADEELTSYYRPGYAPQETPILTALRRFLENHRKSRTFLLVTVLFGASLVIGDGVLTPPMSVLSSFSGLQVHSTALTSGEVEILSCTVLVCLFMVQHWGTHRVAFLFAPVVIVWLLLLGALGVYNIVVWNPRVLRALSPYYLVRFFQHTGKDGWISLGGILLSMTGTEAMYADLGHFTAASIRVAFVGLIYPCLVLQYMGQAAFLSKSPHCDIHFVFFESIPTGIFWPVLVIATLAAIVGSQAVISATFSIVRQCTALGCFPRVKIVHTSRRIHGQIYSPEINWILMLLCIAVTMGLRDTTLIGNAYGMACAGVMLVTTLLMALVIVFVWQYSCLVAALFLVAFGVVEAVYLSAALMKVPQGGWLPLVLSLVFVAVMYVWHYGTRRKHQFDVQNKVSLRWIHALGPSLGIVRVPGIGIIYSELATGVPAIFSHFVTNLPAFHQVLVFICVKAVPVPHVRDEERHLVGRIGPREFRMYRCVVRHGYKDVLAEDTDFENDLVLRIAEFVQMEADFDQRCSISDDGVVASVEVEGRMAVVPRPSDLARTGLLMREPGEEESVVARAAAAAKPESLIHSMHTMHEAESPGFASRRRVRFEVANQHTDPRVKEELSALVEAKHAGVAYIMGHSYIKARKSSSVFKKFAVNVAYAFLRKNCRGPGLVLNIPHISLIEVGMIYYV</sequence>
<gene>
    <name type="primary">HAK3</name>
    <name type="ordered locus">Os01g0369300</name>
    <name type="ordered locus">LOC_Os01g27170</name>
    <name type="ORF">P0043B10.36</name>
    <name type="ORF">P0560B06.33</name>
</gene>
<proteinExistence type="evidence at transcript level"/>
<comment type="function">
    <text evidence="1">High-affinity potassium transporter.</text>
</comment>
<comment type="subcellular location">
    <subcellularLocation>
        <location evidence="3">Membrane</location>
        <topology evidence="3">Multi-pass membrane protein</topology>
    </subcellularLocation>
</comment>
<comment type="similarity">
    <text evidence="3">Belongs to the HAK/KUP transporter (TC 2.A.72.3) family.</text>
</comment>
<comment type="sequence caution" evidence="3">
    <conflict type="erroneous gene model prediction">
        <sequence resource="EMBL-CDS" id="AAK53843"/>
    </conflict>
</comment>
<comment type="sequence caution" evidence="3">
    <conflict type="erroneous gene model prediction">
        <sequence resource="EMBL-CDS" id="BAB64765"/>
    </conflict>
</comment>
<comment type="sequence caution" evidence="3">
    <conflict type="erroneous gene model prediction">
        <sequence resource="EMBL-CDS" id="BAF04964"/>
    </conflict>
</comment>
<comment type="sequence caution" evidence="3">
    <conflict type="erroneous gene model prediction">
        <sequence resource="EMBL-CDS" id="CAD20995"/>
    </conflict>
</comment>
<name>HAK3_ORYSJ</name>